<comment type="function">
    <text evidence="1">NDH-1 shuttles electrons from NADH, via FMN and iron-sulfur (Fe-S) centers, to quinones in the respiratory chain. The immediate electron acceptor for the enzyme in this species is believed to be ubiquinone. Couples the redox reaction to proton translocation (for every two electrons transferred, four hydrogen ions are translocated across the cytoplasmic membrane), and thus conserves the redox energy in a proton gradient.</text>
</comment>
<comment type="catalytic activity">
    <reaction evidence="1">
        <text>a quinone + NADH + 5 H(+)(in) = a quinol + NAD(+) + 4 H(+)(out)</text>
        <dbReference type="Rhea" id="RHEA:57888"/>
        <dbReference type="ChEBI" id="CHEBI:15378"/>
        <dbReference type="ChEBI" id="CHEBI:24646"/>
        <dbReference type="ChEBI" id="CHEBI:57540"/>
        <dbReference type="ChEBI" id="CHEBI:57945"/>
        <dbReference type="ChEBI" id="CHEBI:132124"/>
    </reaction>
</comment>
<comment type="cofactor">
    <cofactor evidence="1">
        <name>[4Fe-4S] cluster</name>
        <dbReference type="ChEBI" id="CHEBI:49883"/>
    </cofactor>
    <text evidence="1">Binds 2 [4Fe-4S] clusters per subunit.</text>
</comment>
<comment type="subunit">
    <text evidence="1">NDH-1 is composed of 14 different subunits. Subunits NuoA, H, J, K, L, M, N constitute the membrane sector of the complex.</text>
</comment>
<comment type="subcellular location">
    <subcellularLocation>
        <location evidence="1">Cell inner membrane</location>
        <topology evidence="1">Peripheral membrane protein</topology>
    </subcellularLocation>
</comment>
<comment type="similarity">
    <text evidence="1">Belongs to the complex I 23 kDa subunit family.</text>
</comment>
<evidence type="ECO:0000255" key="1">
    <source>
        <dbReference type="HAMAP-Rule" id="MF_01351"/>
    </source>
</evidence>
<feature type="chain" id="PRO_1000143637" description="NADH-quinone oxidoreductase subunit I">
    <location>
        <begin position="1"/>
        <end position="162"/>
    </location>
</feature>
<feature type="domain" description="4Fe-4S ferredoxin-type 1" evidence="1">
    <location>
        <begin position="54"/>
        <end position="83"/>
    </location>
</feature>
<feature type="domain" description="4Fe-4S ferredoxin-type 2" evidence="1">
    <location>
        <begin position="93"/>
        <end position="122"/>
    </location>
</feature>
<feature type="binding site" evidence="1">
    <location>
        <position position="63"/>
    </location>
    <ligand>
        <name>[4Fe-4S] cluster</name>
        <dbReference type="ChEBI" id="CHEBI:49883"/>
        <label>1</label>
    </ligand>
</feature>
<feature type="binding site" evidence="1">
    <location>
        <position position="66"/>
    </location>
    <ligand>
        <name>[4Fe-4S] cluster</name>
        <dbReference type="ChEBI" id="CHEBI:49883"/>
        <label>1</label>
    </ligand>
</feature>
<feature type="binding site" evidence="1">
    <location>
        <position position="69"/>
    </location>
    <ligand>
        <name>[4Fe-4S] cluster</name>
        <dbReference type="ChEBI" id="CHEBI:49883"/>
        <label>1</label>
    </ligand>
</feature>
<feature type="binding site" evidence="1">
    <location>
        <position position="73"/>
    </location>
    <ligand>
        <name>[4Fe-4S] cluster</name>
        <dbReference type="ChEBI" id="CHEBI:49883"/>
        <label>2</label>
    </ligand>
</feature>
<feature type="binding site" evidence="1">
    <location>
        <position position="102"/>
    </location>
    <ligand>
        <name>[4Fe-4S] cluster</name>
        <dbReference type="ChEBI" id="CHEBI:49883"/>
        <label>2</label>
    </ligand>
</feature>
<feature type="binding site" evidence="1">
    <location>
        <position position="105"/>
    </location>
    <ligand>
        <name>[4Fe-4S] cluster</name>
        <dbReference type="ChEBI" id="CHEBI:49883"/>
        <label>2</label>
    </ligand>
</feature>
<feature type="binding site" evidence="1">
    <location>
        <position position="108"/>
    </location>
    <ligand>
        <name>[4Fe-4S] cluster</name>
        <dbReference type="ChEBI" id="CHEBI:49883"/>
        <label>2</label>
    </ligand>
</feature>
<feature type="binding site" evidence="1">
    <location>
        <position position="112"/>
    </location>
    <ligand>
        <name>[4Fe-4S] cluster</name>
        <dbReference type="ChEBI" id="CHEBI:49883"/>
        <label>1</label>
    </ligand>
</feature>
<sequence>MTAIQHFFKTFFLTELLKGLALTGRYTFRRKFTVQFPEEKTPISPRFRGLHALRRYENGEERCIACKLCEAVCPALAITIESETRADNTRRTTRYDIDLTKCIFCGFCEESCPVDSIVETQILEYHGEKRGDLYFTKEMLLAVGDRYEKDIAAAKAADAPYR</sequence>
<proteinExistence type="inferred from homology"/>
<protein>
    <recommendedName>
        <fullName evidence="1">NADH-quinone oxidoreductase subunit I</fullName>
        <ecNumber evidence="1">7.1.1.-</ecNumber>
    </recommendedName>
    <alternativeName>
        <fullName evidence="1">NADH dehydrogenase I subunit I</fullName>
    </alternativeName>
    <alternativeName>
        <fullName evidence="1">NDH-1 subunit I</fullName>
    </alternativeName>
</protein>
<organism>
    <name type="scientific">Burkholderia multivorans (strain ATCC 17616 / 249)</name>
    <dbReference type="NCBI Taxonomy" id="395019"/>
    <lineage>
        <taxon>Bacteria</taxon>
        <taxon>Pseudomonadati</taxon>
        <taxon>Pseudomonadota</taxon>
        <taxon>Betaproteobacteria</taxon>
        <taxon>Burkholderiales</taxon>
        <taxon>Burkholderiaceae</taxon>
        <taxon>Burkholderia</taxon>
        <taxon>Burkholderia cepacia complex</taxon>
    </lineage>
</organism>
<name>NUOI_BURM1</name>
<accession>A9AFZ5</accession>
<dbReference type="EC" id="7.1.1.-" evidence="1"/>
<dbReference type="EMBL" id="CP000868">
    <property type="protein sequence ID" value="ABX14727.1"/>
    <property type="molecule type" value="Genomic_DNA"/>
</dbReference>
<dbReference type="EMBL" id="AP009385">
    <property type="protein sequence ID" value="BAG44123.1"/>
    <property type="molecule type" value="Genomic_DNA"/>
</dbReference>
<dbReference type="RefSeq" id="WP_006398806.1">
    <property type="nucleotide sequence ID" value="NC_010804.1"/>
</dbReference>
<dbReference type="SMR" id="A9AFZ5"/>
<dbReference type="STRING" id="395019.BMULJ_02227"/>
<dbReference type="GeneID" id="98107313"/>
<dbReference type="KEGG" id="bmj:BMULJ_02227"/>
<dbReference type="KEGG" id="bmu:Bmul_1036"/>
<dbReference type="eggNOG" id="COG1143">
    <property type="taxonomic scope" value="Bacteria"/>
</dbReference>
<dbReference type="HOGENOM" id="CLU_067218_5_1_4"/>
<dbReference type="Proteomes" id="UP000008815">
    <property type="component" value="Chromosome 1"/>
</dbReference>
<dbReference type="GO" id="GO:0005886">
    <property type="term" value="C:plasma membrane"/>
    <property type="evidence" value="ECO:0007669"/>
    <property type="project" value="UniProtKB-SubCell"/>
</dbReference>
<dbReference type="GO" id="GO:0051539">
    <property type="term" value="F:4 iron, 4 sulfur cluster binding"/>
    <property type="evidence" value="ECO:0007669"/>
    <property type="project" value="UniProtKB-KW"/>
</dbReference>
<dbReference type="GO" id="GO:0005506">
    <property type="term" value="F:iron ion binding"/>
    <property type="evidence" value="ECO:0007669"/>
    <property type="project" value="UniProtKB-UniRule"/>
</dbReference>
<dbReference type="GO" id="GO:0050136">
    <property type="term" value="F:NADH:ubiquinone reductase (non-electrogenic) activity"/>
    <property type="evidence" value="ECO:0007669"/>
    <property type="project" value="UniProtKB-UniRule"/>
</dbReference>
<dbReference type="GO" id="GO:0048038">
    <property type="term" value="F:quinone binding"/>
    <property type="evidence" value="ECO:0007669"/>
    <property type="project" value="UniProtKB-KW"/>
</dbReference>
<dbReference type="GO" id="GO:0009060">
    <property type="term" value="P:aerobic respiration"/>
    <property type="evidence" value="ECO:0007669"/>
    <property type="project" value="TreeGrafter"/>
</dbReference>
<dbReference type="FunFam" id="3.30.70.3270:FF:000003">
    <property type="entry name" value="NADH-quinone oxidoreductase subunit I"/>
    <property type="match status" value="1"/>
</dbReference>
<dbReference type="Gene3D" id="3.30.70.3270">
    <property type="match status" value="1"/>
</dbReference>
<dbReference type="HAMAP" id="MF_01351">
    <property type="entry name" value="NDH1_NuoI"/>
    <property type="match status" value="1"/>
</dbReference>
<dbReference type="InterPro" id="IPR017896">
    <property type="entry name" value="4Fe4S_Fe-S-bd"/>
</dbReference>
<dbReference type="InterPro" id="IPR017900">
    <property type="entry name" value="4Fe4S_Fe_S_CS"/>
</dbReference>
<dbReference type="InterPro" id="IPR010226">
    <property type="entry name" value="NADH_quinone_OxRdtase_chainI"/>
</dbReference>
<dbReference type="NCBIfam" id="TIGR01971">
    <property type="entry name" value="NuoI"/>
    <property type="match status" value="1"/>
</dbReference>
<dbReference type="NCBIfam" id="NF004538">
    <property type="entry name" value="PRK05888.1-4"/>
    <property type="match status" value="1"/>
</dbReference>
<dbReference type="NCBIfam" id="NF004539">
    <property type="entry name" value="PRK05888.1-5"/>
    <property type="match status" value="1"/>
</dbReference>
<dbReference type="PANTHER" id="PTHR10849:SF20">
    <property type="entry name" value="NADH DEHYDROGENASE [UBIQUINONE] IRON-SULFUR PROTEIN 8, MITOCHONDRIAL"/>
    <property type="match status" value="1"/>
</dbReference>
<dbReference type="PANTHER" id="PTHR10849">
    <property type="entry name" value="NADH DEHYDROGENASE UBIQUINONE IRON-SULFUR PROTEIN 8, MITOCHONDRIAL"/>
    <property type="match status" value="1"/>
</dbReference>
<dbReference type="Pfam" id="PF12838">
    <property type="entry name" value="Fer4_7"/>
    <property type="match status" value="1"/>
</dbReference>
<dbReference type="SUPFAM" id="SSF54862">
    <property type="entry name" value="4Fe-4S ferredoxins"/>
    <property type="match status" value="1"/>
</dbReference>
<dbReference type="PROSITE" id="PS00198">
    <property type="entry name" value="4FE4S_FER_1"/>
    <property type="match status" value="2"/>
</dbReference>
<dbReference type="PROSITE" id="PS51379">
    <property type="entry name" value="4FE4S_FER_2"/>
    <property type="match status" value="2"/>
</dbReference>
<reference key="1">
    <citation type="submission" date="2007-10" db="EMBL/GenBank/DDBJ databases">
        <title>Complete sequence of chromosome 1 of Burkholderia multivorans ATCC 17616.</title>
        <authorList>
            <person name="Copeland A."/>
            <person name="Lucas S."/>
            <person name="Lapidus A."/>
            <person name="Barry K."/>
            <person name="Glavina del Rio T."/>
            <person name="Dalin E."/>
            <person name="Tice H."/>
            <person name="Pitluck S."/>
            <person name="Chain P."/>
            <person name="Malfatti S."/>
            <person name="Shin M."/>
            <person name="Vergez L."/>
            <person name="Schmutz J."/>
            <person name="Larimer F."/>
            <person name="Land M."/>
            <person name="Hauser L."/>
            <person name="Kyrpides N."/>
            <person name="Kim E."/>
            <person name="Tiedje J."/>
            <person name="Richardson P."/>
        </authorList>
    </citation>
    <scope>NUCLEOTIDE SEQUENCE [LARGE SCALE GENOMIC DNA]</scope>
    <source>
        <strain>ATCC 17616 / 249</strain>
    </source>
</reference>
<reference key="2">
    <citation type="submission" date="2007-04" db="EMBL/GenBank/DDBJ databases">
        <title>Complete genome sequence of Burkholderia multivorans ATCC 17616.</title>
        <authorList>
            <person name="Ohtsubo Y."/>
            <person name="Yamashita A."/>
            <person name="Kurokawa K."/>
            <person name="Takami H."/>
            <person name="Yuhara S."/>
            <person name="Nishiyama E."/>
            <person name="Endo R."/>
            <person name="Miyazaki R."/>
            <person name="Ono A."/>
            <person name="Yano K."/>
            <person name="Ito M."/>
            <person name="Sota M."/>
            <person name="Yuji N."/>
            <person name="Hattori M."/>
            <person name="Tsuda M."/>
        </authorList>
    </citation>
    <scope>NUCLEOTIDE SEQUENCE [LARGE SCALE GENOMIC DNA]</scope>
    <source>
        <strain>ATCC 17616 / 249</strain>
    </source>
</reference>
<keyword id="KW-0004">4Fe-4S</keyword>
<keyword id="KW-0997">Cell inner membrane</keyword>
<keyword id="KW-1003">Cell membrane</keyword>
<keyword id="KW-0408">Iron</keyword>
<keyword id="KW-0411">Iron-sulfur</keyword>
<keyword id="KW-0472">Membrane</keyword>
<keyword id="KW-0479">Metal-binding</keyword>
<keyword id="KW-0520">NAD</keyword>
<keyword id="KW-0874">Quinone</keyword>
<keyword id="KW-1185">Reference proteome</keyword>
<keyword id="KW-0677">Repeat</keyword>
<keyword id="KW-1278">Translocase</keyword>
<keyword id="KW-0830">Ubiquinone</keyword>
<gene>
    <name evidence="1" type="primary">nuoI</name>
    <name type="ordered locus">Bmul_1036</name>
    <name type="ordered locus">BMULJ_02227</name>
</gene>